<feature type="chain" id="PRO_0000202868" description="Uncharacterized protein YGR273C">
    <location>
        <begin position="1"/>
        <end position="174"/>
    </location>
</feature>
<feature type="region of interest" description="Disordered" evidence="1">
    <location>
        <begin position="78"/>
        <end position="97"/>
    </location>
</feature>
<organism>
    <name type="scientific">Saccharomyces cerevisiae (strain ATCC 204508 / S288c)</name>
    <name type="common">Baker's yeast</name>
    <dbReference type="NCBI Taxonomy" id="559292"/>
    <lineage>
        <taxon>Eukaryota</taxon>
        <taxon>Fungi</taxon>
        <taxon>Dikarya</taxon>
        <taxon>Ascomycota</taxon>
        <taxon>Saccharomycotina</taxon>
        <taxon>Saccharomycetes</taxon>
        <taxon>Saccharomycetales</taxon>
        <taxon>Saccharomycetaceae</taxon>
        <taxon>Saccharomyces</taxon>
    </lineage>
</organism>
<gene>
    <name type="ordered locus">YGR273C</name>
    <name type="ORF">G9371</name>
</gene>
<proteinExistence type="predicted"/>
<sequence length="174" mass="20015">MQHFESSDKIEKDDDTSRIKLRSSSLAAPILEAVQEAQPFEEATFSNLQKIHPLTENSTCNGYVIYDKDGNLKSMKDTFGRNIKTPDISNPTRARNERPLDTIRGFEYSITKDPRWLQELETSKLGFKPRPGFAVINQDSQASINLSQLEEKVMESQKKKEKRHISRLSRLLCR</sequence>
<dbReference type="EMBL" id="X84098">
    <property type="protein sequence ID" value="CAA58895.1"/>
    <property type="molecule type" value="Genomic_DNA"/>
</dbReference>
<dbReference type="EMBL" id="Z73058">
    <property type="protein sequence ID" value="CAA97303.1"/>
    <property type="molecule type" value="Genomic_DNA"/>
</dbReference>
<dbReference type="EMBL" id="AY692577">
    <property type="protein sequence ID" value="AAT92596.1"/>
    <property type="molecule type" value="Genomic_DNA"/>
</dbReference>
<dbReference type="EMBL" id="BK006941">
    <property type="protein sequence ID" value="DAA08361.1"/>
    <property type="molecule type" value="Genomic_DNA"/>
</dbReference>
<dbReference type="PIR" id="S64606">
    <property type="entry name" value="S64606"/>
</dbReference>
<dbReference type="RefSeq" id="NP_011789.1">
    <property type="nucleotide sequence ID" value="NM_001181402.1"/>
</dbReference>
<dbReference type="BioGRID" id="33523">
    <property type="interactions" value="76"/>
</dbReference>
<dbReference type="FunCoup" id="P53329">
    <property type="interactions" value="23"/>
</dbReference>
<dbReference type="IntAct" id="P53329">
    <property type="interactions" value="1"/>
</dbReference>
<dbReference type="STRING" id="4932.YGR273C"/>
<dbReference type="PaxDb" id="4932-YGR273C"/>
<dbReference type="PeptideAtlas" id="P53329"/>
<dbReference type="EnsemblFungi" id="YGR273C_mRNA">
    <property type="protein sequence ID" value="YGR273C"/>
    <property type="gene ID" value="YGR273C"/>
</dbReference>
<dbReference type="GeneID" id="853190"/>
<dbReference type="KEGG" id="sce:YGR273C"/>
<dbReference type="AGR" id="SGD:S000003505"/>
<dbReference type="SGD" id="S000003505">
    <property type="gene designation" value="YGR273C"/>
</dbReference>
<dbReference type="VEuPathDB" id="FungiDB:YGR273C"/>
<dbReference type="eggNOG" id="ENOG502RXHE">
    <property type="taxonomic scope" value="Eukaryota"/>
</dbReference>
<dbReference type="GeneTree" id="ENSGT00940000176586"/>
<dbReference type="HOGENOM" id="CLU_1448501_0_0_1"/>
<dbReference type="InParanoid" id="P53329"/>
<dbReference type="OMA" id="IHPLTEN"/>
<dbReference type="OrthoDB" id="5330253at2759"/>
<dbReference type="BioCyc" id="YEAST:G3O-30938-MONOMER"/>
<dbReference type="BioGRID-ORCS" id="853190">
    <property type="hits" value="0 hits in 10 CRISPR screens"/>
</dbReference>
<dbReference type="ChiTaRS" id="YGR273C">
    <property type="organism name" value="yeast"/>
</dbReference>
<dbReference type="PRO" id="PR:P53329"/>
<dbReference type="Proteomes" id="UP000002311">
    <property type="component" value="Chromosome VII"/>
</dbReference>
<dbReference type="RNAct" id="P53329">
    <property type="molecule type" value="protein"/>
</dbReference>
<dbReference type="InterPro" id="IPR018809">
    <property type="entry name" value="DUF2406"/>
</dbReference>
<dbReference type="PANTHER" id="PTHR28186">
    <property type="entry name" value="MEIOTICALLY UP-REGULATED GENE 9 PROTEIN"/>
    <property type="match status" value="1"/>
</dbReference>
<dbReference type="PANTHER" id="PTHR28186:SF1">
    <property type="entry name" value="MEIOTICALLY UP-REGULATED GENE 9 PROTEIN"/>
    <property type="match status" value="1"/>
</dbReference>
<dbReference type="Pfam" id="PF10295">
    <property type="entry name" value="DUF2406"/>
    <property type="match status" value="1"/>
</dbReference>
<name>YG5Q_YEAST</name>
<evidence type="ECO:0000256" key="1">
    <source>
        <dbReference type="SAM" id="MobiDB-lite"/>
    </source>
</evidence>
<evidence type="ECO:0000305" key="2"/>
<protein>
    <recommendedName>
        <fullName>Uncharacterized protein YGR273C</fullName>
    </recommendedName>
</protein>
<comment type="similarity">
    <text evidence="2">To yeast YMR295c.</text>
</comment>
<keyword id="KW-1185">Reference proteome</keyword>
<reference key="1">
    <citation type="journal article" date="1997" name="Yeast">
        <title>The sequence of a 8 kb segment on the right arm of yeast chromosome VII identifies four new open reading frames and the genes for yTAFII145.</title>
        <authorList>
            <person name="Ruzzi M."/>
            <person name="Marconi A."/>
            <person name="Saliola M."/>
            <person name="Fabiani L."/>
            <person name="Montebove F."/>
            <person name="Frontali L."/>
        </authorList>
    </citation>
    <scope>NUCLEOTIDE SEQUENCE [GENOMIC DNA]</scope>
    <source>
        <strain>ATCC 204508 / S288c</strain>
    </source>
</reference>
<reference key="2">
    <citation type="journal article" date="1997" name="Nature">
        <title>The nucleotide sequence of Saccharomyces cerevisiae chromosome VII.</title>
        <authorList>
            <person name="Tettelin H."/>
            <person name="Agostoni-Carbone M.L."/>
            <person name="Albermann K."/>
            <person name="Albers M."/>
            <person name="Arroyo J."/>
            <person name="Backes U."/>
            <person name="Barreiros T."/>
            <person name="Bertani I."/>
            <person name="Bjourson A.J."/>
            <person name="Brueckner M."/>
            <person name="Bruschi C.V."/>
            <person name="Carignani G."/>
            <person name="Castagnoli L."/>
            <person name="Cerdan E."/>
            <person name="Clemente M.L."/>
            <person name="Coblenz A."/>
            <person name="Coglievina M."/>
            <person name="Coissac E."/>
            <person name="Defoor E."/>
            <person name="Del Bino S."/>
            <person name="Delius H."/>
            <person name="Delneri D."/>
            <person name="de Wergifosse P."/>
            <person name="Dujon B."/>
            <person name="Durand P."/>
            <person name="Entian K.-D."/>
            <person name="Eraso P."/>
            <person name="Escribano V."/>
            <person name="Fabiani L."/>
            <person name="Fartmann B."/>
            <person name="Feroli F."/>
            <person name="Feuermann M."/>
            <person name="Frontali L."/>
            <person name="Garcia-Gonzalez M."/>
            <person name="Garcia-Saez M.I."/>
            <person name="Goffeau A."/>
            <person name="Guerreiro P."/>
            <person name="Hani J."/>
            <person name="Hansen M."/>
            <person name="Hebling U."/>
            <person name="Hernandez K."/>
            <person name="Heumann K."/>
            <person name="Hilger F."/>
            <person name="Hofmann B."/>
            <person name="Indge K.J."/>
            <person name="James C.M."/>
            <person name="Klima R."/>
            <person name="Koetter P."/>
            <person name="Kramer B."/>
            <person name="Kramer W."/>
            <person name="Lauquin G."/>
            <person name="Leuther H."/>
            <person name="Louis E.J."/>
            <person name="Maillier E."/>
            <person name="Marconi A."/>
            <person name="Martegani E."/>
            <person name="Mazon M.J."/>
            <person name="Mazzoni C."/>
            <person name="McReynolds A.D.K."/>
            <person name="Melchioretto P."/>
            <person name="Mewes H.-W."/>
            <person name="Minenkova O."/>
            <person name="Mueller-Auer S."/>
            <person name="Nawrocki A."/>
            <person name="Netter P."/>
            <person name="Neu R."/>
            <person name="Nombela C."/>
            <person name="Oliver S.G."/>
            <person name="Panzeri L."/>
            <person name="Paoluzi S."/>
            <person name="Plevani P."/>
            <person name="Portetelle D."/>
            <person name="Portillo F."/>
            <person name="Potier S."/>
            <person name="Purnelle B."/>
            <person name="Rieger M."/>
            <person name="Riles L."/>
            <person name="Rinaldi T."/>
            <person name="Robben J."/>
            <person name="Rodrigues-Pousada C."/>
            <person name="Rodriguez-Belmonte E."/>
            <person name="Rodriguez-Torres A.M."/>
            <person name="Rose M."/>
            <person name="Ruzzi M."/>
            <person name="Saliola M."/>
            <person name="Sanchez-Perez M."/>
            <person name="Schaefer B."/>
            <person name="Schaefer M."/>
            <person name="Scharfe M."/>
            <person name="Schmidheini T."/>
            <person name="Schreer A."/>
            <person name="Skala J."/>
            <person name="Souciet J.-L."/>
            <person name="Steensma H.Y."/>
            <person name="Talla E."/>
            <person name="Thierry A."/>
            <person name="Vandenbol M."/>
            <person name="van der Aart Q.J.M."/>
            <person name="Van Dyck L."/>
            <person name="Vanoni M."/>
            <person name="Verhasselt P."/>
            <person name="Voet M."/>
            <person name="Volckaert G."/>
            <person name="Wambutt R."/>
            <person name="Watson M.D."/>
            <person name="Weber N."/>
            <person name="Wedler E."/>
            <person name="Wedler H."/>
            <person name="Wipfli P."/>
            <person name="Wolf K."/>
            <person name="Wright L.F."/>
            <person name="Zaccaria P."/>
            <person name="Zimmermann M."/>
            <person name="Zollner A."/>
            <person name="Kleine K."/>
        </authorList>
    </citation>
    <scope>NUCLEOTIDE SEQUENCE [LARGE SCALE GENOMIC DNA]</scope>
    <source>
        <strain>ATCC 204508 / S288c</strain>
    </source>
</reference>
<reference key="3">
    <citation type="journal article" date="2014" name="G3 (Bethesda)">
        <title>The reference genome sequence of Saccharomyces cerevisiae: Then and now.</title>
        <authorList>
            <person name="Engel S.R."/>
            <person name="Dietrich F.S."/>
            <person name="Fisk D.G."/>
            <person name="Binkley G."/>
            <person name="Balakrishnan R."/>
            <person name="Costanzo M.C."/>
            <person name="Dwight S.S."/>
            <person name="Hitz B.C."/>
            <person name="Karra K."/>
            <person name="Nash R.S."/>
            <person name="Weng S."/>
            <person name="Wong E.D."/>
            <person name="Lloyd P."/>
            <person name="Skrzypek M.S."/>
            <person name="Miyasato S.R."/>
            <person name="Simison M."/>
            <person name="Cherry J.M."/>
        </authorList>
    </citation>
    <scope>GENOME REANNOTATION</scope>
    <source>
        <strain>ATCC 204508 / S288c</strain>
    </source>
</reference>
<reference key="4">
    <citation type="journal article" date="2007" name="Genome Res.">
        <title>Approaching a complete repository of sequence-verified protein-encoding clones for Saccharomyces cerevisiae.</title>
        <authorList>
            <person name="Hu Y."/>
            <person name="Rolfs A."/>
            <person name="Bhullar B."/>
            <person name="Murthy T.V.S."/>
            <person name="Zhu C."/>
            <person name="Berger M.F."/>
            <person name="Camargo A.A."/>
            <person name="Kelley F."/>
            <person name="McCarron S."/>
            <person name="Jepson D."/>
            <person name="Richardson A."/>
            <person name="Raphael J."/>
            <person name="Moreira D."/>
            <person name="Taycher E."/>
            <person name="Zuo D."/>
            <person name="Mohr S."/>
            <person name="Kane M.F."/>
            <person name="Williamson J."/>
            <person name="Simpson A.J.G."/>
            <person name="Bulyk M.L."/>
            <person name="Harlow E."/>
            <person name="Marsischky G."/>
            <person name="Kolodner R.D."/>
            <person name="LaBaer J."/>
        </authorList>
    </citation>
    <scope>NUCLEOTIDE SEQUENCE [GENOMIC DNA]</scope>
    <source>
        <strain>ATCC 204508 / S288c</strain>
    </source>
</reference>
<accession>P53329</accession>
<accession>D6VV50</accession>